<evidence type="ECO:0000255" key="1">
    <source>
        <dbReference type="HAMAP-Rule" id="MF_00041"/>
    </source>
</evidence>
<name>SYC_RHOPT</name>
<keyword id="KW-0030">Aminoacyl-tRNA synthetase</keyword>
<keyword id="KW-0067">ATP-binding</keyword>
<keyword id="KW-0963">Cytoplasm</keyword>
<keyword id="KW-0436">Ligase</keyword>
<keyword id="KW-0479">Metal-binding</keyword>
<keyword id="KW-0547">Nucleotide-binding</keyword>
<keyword id="KW-0648">Protein biosynthesis</keyword>
<keyword id="KW-0862">Zinc</keyword>
<reference key="1">
    <citation type="submission" date="2008-05" db="EMBL/GenBank/DDBJ databases">
        <title>Complete sequence of Rhodopseudomonas palustris TIE-1.</title>
        <authorList>
            <consortium name="US DOE Joint Genome Institute"/>
            <person name="Lucas S."/>
            <person name="Copeland A."/>
            <person name="Lapidus A."/>
            <person name="Glavina del Rio T."/>
            <person name="Dalin E."/>
            <person name="Tice H."/>
            <person name="Pitluck S."/>
            <person name="Chain P."/>
            <person name="Malfatti S."/>
            <person name="Shin M."/>
            <person name="Vergez L."/>
            <person name="Lang D."/>
            <person name="Schmutz J."/>
            <person name="Larimer F."/>
            <person name="Land M."/>
            <person name="Hauser L."/>
            <person name="Kyrpides N."/>
            <person name="Mikhailova N."/>
            <person name="Emerson D."/>
            <person name="Newman D.K."/>
            <person name="Roden E."/>
            <person name="Richardson P."/>
        </authorList>
    </citation>
    <scope>NUCLEOTIDE SEQUENCE [LARGE SCALE GENOMIC DNA]</scope>
    <source>
        <strain>TIE-1</strain>
    </source>
</reference>
<feature type="chain" id="PRO_1000090864" description="Cysteine--tRNA ligase">
    <location>
        <begin position="1"/>
        <end position="491"/>
    </location>
</feature>
<feature type="short sequence motif" description="'HIGH' region">
    <location>
        <begin position="31"/>
        <end position="41"/>
    </location>
</feature>
<feature type="short sequence motif" description="'KMSKS' region">
    <location>
        <begin position="285"/>
        <end position="289"/>
    </location>
</feature>
<feature type="binding site" evidence="1">
    <location>
        <position position="29"/>
    </location>
    <ligand>
        <name>Zn(2+)</name>
        <dbReference type="ChEBI" id="CHEBI:29105"/>
    </ligand>
</feature>
<feature type="binding site" evidence="1">
    <location>
        <position position="227"/>
    </location>
    <ligand>
        <name>Zn(2+)</name>
        <dbReference type="ChEBI" id="CHEBI:29105"/>
    </ligand>
</feature>
<feature type="binding site" evidence="1">
    <location>
        <position position="252"/>
    </location>
    <ligand>
        <name>Zn(2+)</name>
        <dbReference type="ChEBI" id="CHEBI:29105"/>
    </ligand>
</feature>
<feature type="binding site" evidence="1">
    <location>
        <position position="256"/>
    </location>
    <ligand>
        <name>Zn(2+)</name>
        <dbReference type="ChEBI" id="CHEBI:29105"/>
    </ligand>
</feature>
<feature type="binding site" evidence="1">
    <location>
        <position position="288"/>
    </location>
    <ligand>
        <name>ATP</name>
        <dbReference type="ChEBI" id="CHEBI:30616"/>
    </ligand>
</feature>
<comment type="catalytic activity">
    <reaction evidence="1">
        <text>tRNA(Cys) + L-cysteine + ATP = L-cysteinyl-tRNA(Cys) + AMP + diphosphate</text>
        <dbReference type="Rhea" id="RHEA:17773"/>
        <dbReference type="Rhea" id="RHEA-COMP:9661"/>
        <dbReference type="Rhea" id="RHEA-COMP:9679"/>
        <dbReference type="ChEBI" id="CHEBI:30616"/>
        <dbReference type="ChEBI" id="CHEBI:33019"/>
        <dbReference type="ChEBI" id="CHEBI:35235"/>
        <dbReference type="ChEBI" id="CHEBI:78442"/>
        <dbReference type="ChEBI" id="CHEBI:78517"/>
        <dbReference type="ChEBI" id="CHEBI:456215"/>
        <dbReference type="EC" id="6.1.1.16"/>
    </reaction>
</comment>
<comment type="cofactor">
    <cofactor evidence="1">
        <name>Zn(2+)</name>
        <dbReference type="ChEBI" id="CHEBI:29105"/>
    </cofactor>
    <text evidence="1">Binds 1 zinc ion per subunit.</text>
</comment>
<comment type="subunit">
    <text evidence="1">Monomer.</text>
</comment>
<comment type="subcellular location">
    <subcellularLocation>
        <location evidence="1">Cytoplasm</location>
    </subcellularLocation>
</comment>
<comment type="similarity">
    <text evidence="1">Belongs to the class-I aminoacyl-tRNA synthetase family.</text>
</comment>
<proteinExistence type="inferred from homology"/>
<gene>
    <name evidence="1" type="primary">cysS</name>
    <name type="ordered locus">Rpal_2208</name>
</gene>
<organism>
    <name type="scientific">Rhodopseudomonas palustris (strain TIE-1)</name>
    <dbReference type="NCBI Taxonomy" id="395960"/>
    <lineage>
        <taxon>Bacteria</taxon>
        <taxon>Pseudomonadati</taxon>
        <taxon>Pseudomonadota</taxon>
        <taxon>Alphaproteobacteria</taxon>
        <taxon>Hyphomicrobiales</taxon>
        <taxon>Nitrobacteraceae</taxon>
        <taxon>Rhodopseudomonas</taxon>
    </lineage>
</organism>
<protein>
    <recommendedName>
        <fullName evidence="1">Cysteine--tRNA ligase</fullName>
        <ecNumber evidence="1">6.1.1.16</ecNumber>
    </recommendedName>
    <alternativeName>
        <fullName evidence="1">Cysteinyl-tRNA synthetase</fullName>
        <shortName evidence="1">CysRS</shortName>
    </alternativeName>
</protein>
<sequence length="491" mass="54716">MELRLYDTLTRDKRPFTPIDPANVRMYVCGPTVYDFAHIGNARPVIVFDVLFRLLRHLYGEAHVKYVRNITDVDDKINDRAARDYPGLPLNEAIRKVTEQTERQFHDDVDALGCLRPTVEPRATEHIGEMRSIIEKLVAGGFAYVEQDHVLFSPSAMNAANGVLPRYGSLANRSLDEMIAGARVDVAPYKRDATDFVLWKPSKPGEPSWPSPAGIATPGRPGWHIECSAMSWKHLGETFDIHGGGIDLVFPHHENEVAQSCCAFHTKRMAQTWMHNGFLQVEGEKMSKSLGNFITIRELLATNKFGGRSWDGATLRLAMLKTHYRQPIDWTVDALEEAQKRVAKYRRTLERFRGGKNVEVPHGVVSALSDDLNTHAAITELDALNRRANGVTHEGPTSEADALAANAIAADELRASLRLLGISVASERSGAVNQIFDQNIQRLIAVRTAARANKDWKESDRIRDELAAMGVVLKDGKDADGKPVTTWELAR</sequence>
<accession>B3QCS4</accession>
<dbReference type="EC" id="6.1.1.16" evidence="1"/>
<dbReference type="EMBL" id="CP001096">
    <property type="protein sequence ID" value="ACF00729.1"/>
    <property type="molecule type" value="Genomic_DNA"/>
</dbReference>
<dbReference type="RefSeq" id="WP_012495522.1">
    <property type="nucleotide sequence ID" value="NC_011004.1"/>
</dbReference>
<dbReference type="SMR" id="B3QCS4"/>
<dbReference type="KEGG" id="rpt:Rpal_2208"/>
<dbReference type="HOGENOM" id="CLU_013528_0_1_5"/>
<dbReference type="OrthoDB" id="9815130at2"/>
<dbReference type="Proteomes" id="UP000001725">
    <property type="component" value="Chromosome"/>
</dbReference>
<dbReference type="GO" id="GO:0005829">
    <property type="term" value="C:cytosol"/>
    <property type="evidence" value="ECO:0007669"/>
    <property type="project" value="TreeGrafter"/>
</dbReference>
<dbReference type="GO" id="GO:0005524">
    <property type="term" value="F:ATP binding"/>
    <property type="evidence" value="ECO:0007669"/>
    <property type="project" value="UniProtKB-UniRule"/>
</dbReference>
<dbReference type="GO" id="GO:0004817">
    <property type="term" value="F:cysteine-tRNA ligase activity"/>
    <property type="evidence" value="ECO:0007669"/>
    <property type="project" value="UniProtKB-UniRule"/>
</dbReference>
<dbReference type="GO" id="GO:0008270">
    <property type="term" value="F:zinc ion binding"/>
    <property type="evidence" value="ECO:0007669"/>
    <property type="project" value="UniProtKB-UniRule"/>
</dbReference>
<dbReference type="GO" id="GO:0006423">
    <property type="term" value="P:cysteinyl-tRNA aminoacylation"/>
    <property type="evidence" value="ECO:0007669"/>
    <property type="project" value="UniProtKB-UniRule"/>
</dbReference>
<dbReference type="CDD" id="cd00672">
    <property type="entry name" value="CysRS_core"/>
    <property type="match status" value="1"/>
</dbReference>
<dbReference type="FunFam" id="3.40.50.620:FF:000068">
    <property type="entry name" value="Cysteine--tRNA ligase"/>
    <property type="match status" value="1"/>
</dbReference>
<dbReference type="Gene3D" id="1.20.120.640">
    <property type="entry name" value="Anticodon-binding domain of a subclass of class I aminoacyl-tRNA synthetases"/>
    <property type="match status" value="1"/>
</dbReference>
<dbReference type="Gene3D" id="3.40.50.620">
    <property type="entry name" value="HUPs"/>
    <property type="match status" value="1"/>
</dbReference>
<dbReference type="HAMAP" id="MF_00041">
    <property type="entry name" value="Cys_tRNA_synth"/>
    <property type="match status" value="1"/>
</dbReference>
<dbReference type="InterPro" id="IPR015803">
    <property type="entry name" value="Cys-tRNA-ligase"/>
</dbReference>
<dbReference type="InterPro" id="IPR024909">
    <property type="entry name" value="Cys-tRNA/MSH_ligase"/>
</dbReference>
<dbReference type="InterPro" id="IPR056411">
    <property type="entry name" value="CysS_C"/>
</dbReference>
<dbReference type="InterPro" id="IPR014729">
    <property type="entry name" value="Rossmann-like_a/b/a_fold"/>
</dbReference>
<dbReference type="InterPro" id="IPR032678">
    <property type="entry name" value="tRNA-synt_1_cat_dom"/>
</dbReference>
<dbReference type="InterPro" id="IPR009080">
    <property type="entry name" value="tRNAsynth_Ia_anticodon-bd"/>
</dbReference>
<dbReference type="NCBIfam" id="TIGR00435">
    <property type="entry name" value="cysS"/>
    <property type="match status" value="1"/>
</dbReference>
<dbReference type="PANTHER" id="PTHR10890:SF3">
    <property type="entry name" value="CYSTEINE--TRNA LIGASE, CYTOPLASMIC"/>
    <property type="match status" value="1"/>
</dbReference>
<dbReference type="PANTHER" id="PTHR10890">
    <property type="entry name" value="CYSTEINYL-TRNA SYNTHETASE"/>
    <property type="match status" value="1"/>
</dbReference>
<dbReference type="Pfam" id="PF23493">
    <property type="entry name" value="CysS_C"/>
    <property type="match status" value="1"/>
</dbReference>
<dbReference type="Pfam" id="PF01406">
    <property type="entry name" value="tRNA-synt_1e"/>
    <property type="match status" value="1"/>
</dbReference>
<dbReference type="PRINTS" id="PR00983">
    <property type="entry name" value="TRNASYNTHCYS"/>
</dbReference>
<dbReference type="SUPFAM" id="SSF47323">
    <property type="entry name" value="Anticodon-binding domain of a subclass of class I aminoacyl-tRNA synthetases"/>
    <property type="match status" value="1"/>
</dbReference>
<dbReference type="SUPFAM" id="SSF52374">
    <property type="entry name" value="Nucleotidylyl transferase"/>
    <property type="match status" value="1"/>
</dbReference>